<accession>A7K6Y8</accession>
<dbReference type="EMBL" id="EF044237">
    <property type="protein sequence ID" value="ABO30561.1"/>
    <property type="molecule type" value="Genomic_DNA"/>
</dbReference>
<dbReference type="SMR" id="A7K6Y8"/>
<dbReference type="eggNOG" id="ENOG502SXYF">
    <property type="taxonomic scope" value="Eukaryota"/>
</dbReference>
<dbReference type="HOGENOM" id="CLU_138624_5_0_1"/>
<dbReference type="InParanoid" id="A7K6Y8"/>
<dbReference type="Proteomes" id="UP000001519">
    <property type="component" value="Unplaced"/>
</dbReference>
<dbReference type="GO" id="GO:0005737">
    <property type="term" value="C:cytoplasm"/>
    <property type="evidence" value="ECO:0000318"/>
    <property type="project" value="GO_Central"/>
</dbReference>
<dbReference type="GO" id="GO:0005509">
    <property type="term" value="F:calcium ion binding"/>
    <property type="evidence" value="ECO:0000318"/>
    <property type="project" value="GO_Central"/>
</dbReference>
<dbReference type="GO" id="GO:0048306">
    <property type="term" value="F:calcium-dependent protein binding"/>
    <property type="evidence" value="ECO:0000318"/>
    <property type="project" value="GO_Central"/>
</dbReference>
<dbReference type="GO" id="GO:0042056">
    <property type="term" value="F:chemoattractant activity"/>
    <property type="evidence" value="ECO:0000318"/>
    <property type="project" value="GO_Central"/>
</dbReference>
<dbReference type="GO" id="GO:0046914">
    <property type="term" value="F:transition metal ion binding"/>
    <property type="evidence" value="ECO:0007669"/>
    <property type="project" value="InterPro"/>
</dbReference>
<dbReference type="GO" id="GO:0043542">
    <property type="term" value="P:endothelial cell migration"/>
    <property type="evidence" value="ECO:0000318"/>
    <property type="project" value="GO_Central"/>
</dbReference>
<dbReference type="CDD" id="cd00213">
    <property type="entry name" value="S-100"/>
    <property type="match status" value="1"/>
</dbReference>
<dbReference type="Gene3D" id="1.10.238.10">
    <property type="entry name" value="EF-hand"/>
    <property type="match status" value="1"/>
</dbReference>
<dbReference type="InterPro" id="IPR011992">
    <property type="entry name" value="EF-hand-dom_pair"/>
</dbReference>
<dbReference type="InterPro" id="IPR018247">
    <property type="entry name" value="EF_Hand_1_Ca_BS"/>
</dbReference>
<dbReference type="InterPro" id="IPR002048">
    <property type="entry name" value="EF_hand_dom"/>
</dbReference>
<dbReference type="InterPro" id="IPR034325">
    <property type="entry name" value="S-100_dom"/>
</dbReference>
<dbReference type="InterPro" id="IPR013787">
    <property type="entry name" value="S100_Ca-bd_sub"/>
</dbReference>
<dbReference type="PANTHER" id="PTHR11639:SF29">
    <property type="entry name" value="PROTEIN S100-A15A"/>
    <property type="match status" value="1"/>
</dbReference>
<dbReference type="PANTHER" id="PTHR11639">
    <property type="entry name" value="S100 CALCIUM-BINDING PROTEIN"/>
    <property type="match status" value="1"/>
</dbReference>
<dbReference type="Pfam" id="PF01023">
    <property type="entry name" value="S_100"/>
    <property type="match status" value="1"/>
</dbReference>
<dbReference type="SMART" id="SM00054">
    <property type="entry name" value="EFh"/>
    <property type="match status" value="1"/>
</dbReference>
<dbReference type="SMART" id="SM01394">
    <property type="entry name" value="S_100"/>
    <property type="match status" value="1"/>
</dbReference>
<dbReference type="SUPFAM" id="SSF47473">
    <property type="entry name" value="EF-hand"/>
    <property type="match status" value="1"/>
</dbReference>
<dbReference type="PROSITE" id="PS00018">
    <property type="entry name" value="EF_HAND_1"/>
    <property type="match status" value="1"/>
</dbReference>
<dbReference type="PROSITE" id="PS50222">
    <property type="entry name" value="EF_HAND_2"/>
    <property type="match status" value="1"/>
</dbReference>
<organism>
    <name type="scientific">Gorilla gorilla gorilla</name>
    <name type="common">Western lowland gorilla</name>
    <dbReference type="NCBI Taxonomy" id="9595"/>
    <lineage>
        <taxon>Eukaryota</taxon>
        <taxon>Metazoa</taxon>
        <taxon>Chordata</taxon>
        <taxon>Craniata</taxon>
        <taxon>Vertebrata</taxon>
        <taxon>Euteleostomi</taxon>
        <taxon>Mammalia</taxon>
        <taxon>Eutheria</taxon>
        <taxon>Euarchontoglires</taxon>
        <taxon>Primates</taxon>
        <taxon>Haplorrhini</taxon>
        <taxon>Catarrhini</taxon>
        <taxon>Hominidae</taxon>
        <taxon>Gorilla</taxon>
    </lineage>
</organism>
<sequence length="108" mass="12908">MTDTPVEESLFQIIHCFHQYAARQGDMETLSLQELQALLMDNMPRFMDSLGQKEPYYVTELFQATDKNRDNQICFDEFLYILGKLVKDYHLQYHRQLCARYCAQHSLY</sequence>
<comment type="similarity">
    <text evidence="2">Belongs to the S-100 family.</text>
</comment>
<feature type="chain" id="PRO_0000320088" description="Protein S100-A15A">
    <location>
        <begin position="1"/>
        <end position="108"/>
    </location>
</feature>
<feature type="domain" description="EF-hand" evidence="1">
    <location>
        <begin position="53"/>
        <end position="88"/>
    </location>
</feature>
<feature type="binding site" evidence="1">
    <location>
        <position position="66"/>
    </location>
    <ligand>
        <name>Ca(2+)</name>
        <dbReference type="ChEBI" id="CHEBI:29108"/>
        <note>high affinity</note>
    </ligand>
</feature>
<feature type="binding site" evidence="1">
    <location>
        <position position="68"/>
    </location>
    <ligand>
        <name>Ca(2+)</name>
        <dbReference type="ChEBI" id="CHEBI:29108"/>
        <note>high affinity</note>
    </ligand>
</feature>
<feature type="binding site" evidence="1">
    <location>
        <position position="70"/>
    </location>
    <ligand>
        <name>Ca(2+)</name>
        <dbReference type="ChEBI" id="CHEBI:29108"/>
        <note>high affinity</note>
    </ligand>
</feature>
<feature type="binding site" evidence="1">
    <location>
        <position position="72"/>
    </location>
    <ligand>
        <name>Ca(2+)</name>
        <dbReference type="ChEBI" id="CHEBI:29108"/>
        <note>high affinity</note>
    </ligand>
</feature>
<feature type="binding site" evidence="1">
    <location>
        <position position="77"/>
    </location>
    <ligand>
        <name>Ca(2+)</name>
        <dbReference type="ChEBI" id="CHEBI:29108"/>
        <note>high affinity</note>
    </ligand>
</feature>
<gene>
    <name type="primary">S100A15A</name>
</gene>
<proteinExistence type="inferred from homology"/>
<evidence type="ECO:0000255" key="1">
    <source>
        <dbReference type="PROSITE-ProRule" id="PRU00448"/>
    </source>
</evidence>
<evidence type="ECO:0000305" key="2"/>
<keyword id="KW-0106">Calcium</keyword>
<keyword id="KW-0479">Metal-binding</keyword>
<keyword id="KW-1185">Reference proteome</keyword>
<keyword id="KW-0862">Zinc</keyword>
<reference key="1">
    <citation type="journal article" date="2007" name="Mol. Biol. Evol.">
        <title>Inactivation of MOXD2 and S100A15A by exon deletion during human evolution.</title>
        <authorList>
            <person name="Hahn Y."/>
            <person name="Jeong S."/>
            <person name="Lee B."/>
        </authorList>
    </citation>
    <scope>NUCLEOTIDE SEQUENCE [GENOMIC DNA]</scope>
</reference>
<protein>
    <recommendedName>
        <fullName>Protein S100-A15A</fullName>
    </recommendedName>
    <alternativeName>
        <fullName>S100 calcium-binding protein A15A</fullName>
    </alternativeName>
</protein>
<name>S115A_GORGO</name>